<evidence type="ECO:0000250" key="1"/>
<evidence type="ECO:0000250" key="2">
    <source>
        <dbReference type="UniProtKB" id="O00462"/>
    </source>
</evidence>
<evidence type="ECO:0000255" key="3"/>
<evidence type="ECO:0000269" key="4">
    <source>
    </source>
</evidence>
<evidence type="ECO:0000269" key="5">
    <source>
    </source>
</evidence>
<evidence type="ECO:0000269" key="6">
    <source>
    </source>
</evidence>
<evidence type="ECO:0000305" key="7"/>
<comment type="function">
    <text evidence="5 6">Exoglycosidase that cleaves the single beta-linked mannose residue from the non-reducing end of beta-mannosidic oligosaccharides of various complexity and length. Involved in the degradation of polymeric mannan and galactomannan. Releases the terminal mannose residue from mannobiose and mannotriose, as well as from galactosyl-mannobiose (GM2), galactosyl-mannotriose (GM3) and di-galactosyl-mannopentaose (G2M5).</text>
</comment>
<comment type="catalytic activity">
    <reaction evidence="4 5">
        <text>Hydrolysis of terminal, non-reducing beta-D-mannose residues in beta-D-mannosides.</text>
        <dbReference type="EC" id="3.2.1.25"/>
    </reaction>
</comment>
<comment type="biophysicochemical properties">
    <kinetics>
        <KM evidence="4">0.3 mM for p-nitrophenyl-beta-mannopyranoside</KM>
        <text>kcat is 4048 min(-1) with p-nitrophenyl-beta-mannopyranoside as substrate.</text>
    </kinetics>
    <phDependence>
        <text evidence="4">Optimum pH is 2.5-5.</text>
    </phDependence>
    <temperatureDependence>
        <text evidence="4">Optimum temperature is 70 degrees Celsius.</text>
    </temperatureDependence>
</comment>
<comment type="pathway">
    <text evidence="2">Glycan metabolism; N-glycan degradation.</text>
</comment>
<comment type="subunit">
    <text evidence="4">Homodimer.</text>
</comment>
<comment type="subcellular location">
    <subcellularLocation>
        <location evidence="4">Secreted</location>
    </subcellularLocation>
</comment>
<comment type="PTM">
    <text evidence="4">N-glycosylated.</text>
</comment>
<comment type="similarity">
    <text evidence="7">Belongs to the glycosyl hydrolase 2 family. Beta-mannosidase A subfamily.</text>
</comment>
<organism>
    <name type="scientific">Aspergillus niger</name>
    <dbReference type="NCBI Taxonomy" id="5061"/>
    <lineage>
        <taxon>Eukaryota</taxon>
        <taxon>Fungi</taxon>
        <taxon>Dikarya</taxon>
        <taxon>Ascomycota</taxon>
        <taxon>Pezizomycotina</taxon>
        <taxon>Eurotiomycetes</taxon>
        <taxon>Eurotiomycetidae</taxon>
        <taxon>Eurotiales</taxon>
        <taxon>Aspergillaceae</taxon>
        <taxon>Aspergillus</taxon>
        <taxon>Aspergillus subgen. Circumdati</taxon>
    </lineage>
</organism>
<reference evidence="7" key="1">
    <citation type="journal article" date="2001" name="Eur. J. Biochem.">
        <title>Cloning and characterization of Aspergillus niger genes encoding an alpha-galactosidase and a beta-mannosidase involved in galactomannan degradation.</title>
        <authorList>
            <person name="Ademark P."/>
            <person name="de Vries R.P."/>
            <person name="Haegglund P."/>
            <person name="Staalbrand H."/>
            <person name="Visser J."/>
        </authorList>
    </citation>
    <scope>NUCLEOTIDE SEQUENCE [GENOMIC DNA]</scope>
    <scope>FUNCTION</scope>
    <scope>CATALYTIC ACTIVITY</scope>
    <source>
        <strain>ATCC 9029 / NRRL 3 / CBS 120.49 / DSM 2466 / N400 / FGSC 732</strain>
    </source>
</reference>
<reference evidence="7" key="2">
    <citation type="journal article" date="1999" name="J. Biotechnol.">
        <title>Hydrolytic properties of a beta-mannosidase purified from Aspergillus niger.</title>
        <authorList>
            <person name="Ademark P."/>
            <person name="Lundqvist J."/>
            <person name="Haegglund P."/>
            <person name="Tenkanen M."/>
            <person name="Torto N."/>
            <person name="Tjerneld F."/>
            <person name="Staalbrand H."/>
        </authorList>
    </citation>
    <scope>PROTEIN SEQUENCE OF 490-504</scope>
    <scope>BIOPHYSICOCHEMICAL PROPERTIES</scope>
    <scope>SUBCELLULAR LOCATION</scope>
    <scope>SUBUNIT</scope>
    <scope>GLYCOSYLATION</scope>
    <source>
        <strain>ATCC 46890</strain>
    </source>
</reference>
<reference key="3">
    <citation type="journal article" date="2013" name="FEBS Lett.">
        <title>Phylogenetic analysis and substrate specificity of GH2 beta-mannosidases from Aspergillus species.</title>
        <authorList>
            <person name="Reddy S.K."/>
            <person name="Rosengren A."/>
            <person name="Klaubauf S."/>
            <person name="Kulkarni T."/>
            <person name="Karlsson E.N."/>
            <person name="de Vries R.P."/>
            <person name="Stalbrand H."/>
        </authorList>
    </citation>
    <scope>FUNCTION</scope>
    <scope>SUBSTRATE SPECIFICITY</scope>
    <source>
        <strain>ATCC 9029 / NRRL 3 / CBS 120.49 / DSM 2466 / N400 / FGSC 732</strain>
    </source>
</reference>
<proteinExistence type="evidence at protein level"/>
<accession>Q9UUZ3</accession>
<feature type="signal peptide" evidence="3">
    <location>
        <begin position="1"/>
        <end position="21"/>
    </location>
</feature>
<feature type="chain" id="PRO_0000012168" description="Beta-mannosidase A">
    <location>
        <begin position="22"/>
        <end position="931"/>
    </location>
</feature>
<feature type="active site" description="Proton donor" evidence="1">
    <location>
        <position position="479"/>
    </location>
</feature>
<feature type="glycosylation site" description="N-linked (GlcNAc...) asparagine" evidence="3">
    <location>
        <position position="40"/>
    </location>
</feature>
<feature type="glycosylation site" description="N-linked (GlcNAc...) asparagine" evidence="3">
    <location>
        <position position="79"/>
    </location>
</feature>
<feature type="glycosylation site" description="N-linked (GlcNAc...) asparagine" evidence="3">
    <location>
        <position position="247"/>
    </location>
</feature>
<feature type="glycosylation site" description="N-linked (GlcNAc...) asparagine" evidence="3">
    <location>
        <position position="282"/>
    </location>
</feature>
<feature type="glycosylation site" description="N-linked (GlcNAc...) asparagine" evidence="3">
    <location>
        <position position="347"/>
    </location>
</feature>
<feature type="glycosylation site" description="N-linked (GlcNAc...) asparagine" evidence="3">
    <location>
        <position position="550"/>
    </location>
</feature>
<feature type="glycosylation site" description="N-linked (GlcNAc...) asparagine" evidence="3">
    <location>
        <position position="608"/>
    </location>
</feature>
<feature type="glycosylation site" description="N-linked (GlcNAc...) asparagine" evidence="3">
    <location>
        <position position="658"/>
    </location>
</feature>
<feature type="glycosylation site" description="N-linked (GlcNAc...) asparagine" evidence="3">
    <location>
        <position position="738"/>
    </location>
</feature>
<feature type="glycosylation site" description="N-linked (GlcNAc...) asparagine" evidence="3">
    <location>
        <position position="790"/>
    </location>
</feature>
<feature type="glycosylation site" description="N-linked (GlcNAc...) asparagine" evidence="3">
    <location>
        <position position="798"/>
    </location>
</feature>
<feature type="glycosylation site" description="N-linked (GlcNAc...) asparagine" evidence="3">
    <location>
        <position position="830"/>
    </location>
</feature>
<feature type="glycosylation site" description="N-linked (GlcNAc...) asparagine" evidence="3">
    <location>
        <position position="918"/>
    </location>
</feature>
<keyword id="KW-0903">Direct protein sequencing</keyword>
<keyword id="KW-0325">Glycoprotein</keyword>
<keyword id="KW-0326">Glycosidase</keyword>
<keyword id="KW-0378">Hydrolase</keyword>
<keyword id="KW-0964">Secreted</keyword>
<keyword id="KW-0732">Signal</keyword>
<sequence>MRHSIGLAAALLAPTLPVALGQHIRDLSSEKWTLSSRALNRTVPAQFPSQVHLDLLRAGVIGEYHGLNDFNLRWIAAANWTYTSQPIKGLLDNYGSTWLVFDGLDTFATISILWTANRIHGQSVSPVSGSMYLPALEACQRRILIRKVSFRGGVTAEVNTCYLHIEWPDDVQLTYEYPNRWFMRKEQSDFGWDWGPAFAPAGPWKPAYIVQLDKKESVYVLNTDLDIYRKNQINYLPPDQSQPWVVNASIDILGPLPAKPTMSIEVRDTHSGTILTSRTLNNVSVAGNAITGVTVLDGLNPKLWWPQSSVIRTSTMFLSLSKVEGTRPWPVWTNGRASAPFFLNQRNITEVQRAQGIAPGANWHFEVNGHEFYAKGSNLIPPDSFWTRVTEERISRLFDAVVVGNQNMLRVWSSGAYLHDYIYDLADEKGILLWSEFEFSDALYPSDDAFLENVAAEIVYNVRRVNHHPSLALWAGGNEIESLMLPRVKDAAPSSYSYYVGEYEKMYISLFLPLVYENTRSISYSPSSTTEGYLYIDLSAPVPMAERYDNTTSGSYYGDTDHYDYDTSVAFDYGSYPVGRFANEFGFHSMPSLQTWQQAVDTEDLYFNSSVVMLRNHHDPAGGLMTDNYANSATGMGEMTMGVISYYPIPSKSDHISNFSAWCHATQLFQADMYKSQIQFYRRGSGMPERQLGSLYWQLEDIWQAPSWAGIEYGGRWKVLHHVMRDIYQPVIVSPFWNYTTGSLDVYVTSDLWSPAAGTVDLTWLDLSGRPIAGNAGTPKSVPFTVGGLNSTRIYGTNVSSLGLPDTKDAVLILSLSAHGRLPNSDRTTNLTHENYATLSWPKDLKIVDPGLKLGYSSKKTTVTVEATSGVSLYTWLDYPEGVVGYFEENAFVLAPGEKKEIGFTVLDDTTNGAWVRNITVQSLWDQKVRG</sequence>
<protein>
    <recommendedName>
        <fullName>Beta-mannosidase A</fullName>
        <ecNumber>3.2.1.25</ecNumber>
    </recommendedName>
    <alternativeName>
        <fullName>Mannanase A</fullName>
        <shortName>Mannase A</shortName>
    </alternativeName>
</protein>
<dbReference type="EC" id="3.2.1.25"/>
<dbReference type="EMBL" id="AJ251874">
    <property type="protein sequence ID" value="CAB63902.1"/>
    <property type="molecule type" value="Genomic_DNA"/>
</dbReference>
<dbReference type="SMR" id="Q9UUZ3"/>
<dbReference type="ChEMBL" id="CHEMBL5417"/>
<dbReference type="CAZy" id="GH2">
    <property type="family name" value="Glycoside Hydrolase Family 2"/>
</dbReference>
<dbReference type="GlyCosmos" id="Q9UUZ3">
    <property type="glycosylation" value="13 sites, No reported glycans"/>
</dbReference>
<dbReference type="VEuPathDB" id="FungiDB:An11g06540"/>
<dbReference type="VEuPathDB" id="FungiDB:ASPNIDRAFT2_1160135"/>
<dbReference type="VEuPathDB" id="FungiDB:ATCC64974_92080"/>
<dbReference type="VEuPathDB" id="FungiDB:M747DRAFT_299830"/>
<dbReference type="BioCyc" id="MetaCyc:MONOMER-17577"/>
<dbReference type="SABIO-RK" id="Q9UUZ3"/>
<dbReference type="UniPathway" id="UPA00280"/>
<dbReference type="GO" id="GO:0005576">
    <property type="term" value="C:extracellular region"/>
    <property type="evidence" value="ECO:0000303"/>
    <property type="project" value="UniProtKB"/>
</dbReference>
<dbReference type="GO" id="GO:0004567">
    <property type="term" value="F:beta-mannosidase activity"/>
    <property type="evidence" value="ECO:0000314"/>
    <property type="project" value="UniProtKB"/>
</dbReference>
<dbReference type="GO" id="GO:0016052">
    <property type="term" value="P:carbohydrate catabolic process"/>
    <property type="evidence" value="ECO:0000314"/>
    <property type="project" value="UniProtKB"/>
</dbReference>
<dbReference type="GO" id="GO:0006516">
    <property type="term" value="P:glycoprotein catabolic process"/>
    <property type="evidence" value="ECO:0007669"/>
    <property type="project" value="TreeGrafter"/>
</dbReference>
<dbReference type="FunFam" id="2.60.40.10:FF:001511">
    <property type="entry name" value="Beta-mannosidase A"/>
    <property type="match status" value="1"/>
</dbReference>
<dbReference type="FunFam" id="3.20.20.80:FF:000084">
    <property type="entry name" value="Beta-mannosidase A"/>
    <property type="match status" value="1"/>
</dbReference>
<dbReference type="Gene3D" id="2.60.120.260">
    <property type="entry name" value="Galactose-binding domain-like"/>
    <property type="match status" value="1"/>
</dbReference>
<dbReference type="Gene3D" id="3.20.20.80">
    <property type="entry name" value="Glycosidases"/>
    <property type="match status" value="1"/>
</dbReference>
<dbReference type="Gene3D" id="2.60.40.10">
    <property type="entry name" value="Immunoglobulins"/>
    <property type="match status" value="3"/>
</dbReference>
<dbReference type="InterPro" id="IPR054593">
    <property type="entry name" value="Beta-mannosidase-like_N2"/>
</dbReference>
<dbReference type="InterPro" id="IPR050887">
    <property type="entry name" value="Beta-mannosidase_GH2"/>
</dbReference>
<dbReference type="InterPro" id="IPR041625">
    <property type="entry name" value="Beta-mannosidase_Ig"/>
</dbReference>
<dbReference type="InterPro" id="IPR008979">
    <property type="entry name" value="Galactose-bd-like_sf"/>
</dbReference>
<dbReference type="InterPro" id="IPR017853">
    <property type="entry name" value="Glycoside_hydrolase_SF"/>
</dbReference>
<dbReference type="InterPro" id="IPR013783">
    <property type="entry name" value="Ig-like_fold"/>
</dbReference>
<dbReference type="InterPro" id="IPR041447">
    <property type="entry name" value="Mannosidase_ig"/>
</dbReference>
<dbReference type="PANTHER" id="PTHR43730">
    <property type="entry name" value="BETA-MANNOSIDASE"/>
    <property type="match status" value="1"/>
</dbReference>
<dbReference type="PANTHER" id="PTHR43730:SF5">
    <property type="entry name" value="BETA-MANNOSIDASE A"/>
    <property type="match status" value="1"/>
</dbReference>
<dbReference type="Pfam" id="PF22666">
    <property type="entry name" value="Glyco_hydro_2_N2"/>
    <property type="match status" value="1"/>
</dbReference>
<dbReference type="Pfam" id="PF17753">
    <property type="entry name" value="Ig_mannosidase"/>
    <property type="match status" value="1"/>
</dbReference>
<dbReference type="Pfam" id="PF17786">
    <property type="entry name" value="Mannosidase_ig"/>
    <property type="match status" value="1"/>
</dbReference>
<dbReference type="SUPFAM" id="SSF51445">
    <property type="entry name" value="(Trans)glycosidases"/>
    <property type="match status" value="1"/>
</dbReference>
<dbReference type="SUPFAM" id="SSF49785">
    <property type="entry name" value="Galactose-binding domain-like"/>
    <property type="match status" value="1"/>
</dbReference>
<gene>
    <name type="primary">mndA</name>
</gene>
<name>MANBA_ASPNG</name>